<sequence length="85" mass="9775">MSIFDYFRAKRAPTSASLAKERLQIIVAHERNKRSLQQPDYLPQMREEIIAVIRKYIPIDSSQVSVNVDNSENCSVLELNITLPD</sequence>
<organism>
    <name type="scientific">Cellvibrio japonicus (strain Ueda107)</name>
    <name type="common">Pseudomonas fluorescens subsp. cellulosa</name>
    <dbReference type="NCBI Taxonomy" id="498211"/>
    <lineage>
        <taxon>Bacteria</taxon>
        <taxon>Pseudomonadati</taxon>
        <taxon>Pseudomonadota</taxon>
        <taxon>Gammaproteobacteria</taxon>
        <taxon>Cellvibrionales</taxon>
        <taxon>Cellvibrionaceae</taxon>
        <taxon>Cellvibrio</taxon>
    </lineage>
</organism>
<comment type="function">
    <text evidence="1">Prevents the cell division inhibition by proteins MinC and MinD at internal division sites while permitting inhibition at polar sites. This ensures cell division at the proper site by restricting the formation of a division septum at the midpoint of the long axis of the cell.</text>
</comment>
<comment type="similarity">
    <text evidence="1">Belongs to the MinE family.</text>
</comment>
<keyword id="KW-0131">Cell cycle</keyword>
<keyword id="KW-0132">Cell division</keyword>
<keyword id="KW-1185">Reference proteome</keyword>
<feature type="chain" id="PRO_1000114210" description="Cell division topological specificity factor">
    <location>
        <begin position="1"/>
        <end position="85"/>
    </location>
</feature>
<name>MINE_CELJU</name>
<evidence type="ECO:0000255" key="1">
    <source>
        <dbReference type="HAMAP-Rule" id="MF_00262"/>
    </source>
</evidence>
<protein>
    <recommendedName>
        <fullName evidence="1">Cell division topological specificity factor</fullName>
    </recommendedName>
</protein>
<dbReference type="EMBL" id="CP000934">
    <property type="protein sequence ID" value="ACE83866.1"/>
    <property type="molecule type" value="Genomic_DNA"/>
</dbReference>
<dbReference type="RefSeq" id="WP_012486956.1">
    <property type="nucleotide sequence ID" value="NC_010995.1"/>
</dbReference>
<dbReference type="SMR" id="B3PCV7"/>
<dbReference type="STRING" id="498211.CJA_1320"/>
<dbReference type="KEGG" id="cja:CJA_1320"/>
<dbReference type="eggNOG" id="COG0851">
    <property type="taxonomic scope" value="Bacteria"/>
</dbReference>
<dbReference type="HOGENOM" id="CLU_137929_2_2_6"/>
<dbReference type="OrthoDB" id="9802655at2"/>
<dbReference type="Proteomes" id="UP000001036">
    <property type="component" value="Chromosome"/>
</dbReference>
<dbReference type="GO" id="GO:0051301">
    <property type="term" value="P:cell division"/>
    <property type="evidence" value="ECO:0007669"/>
    <property type="project" value="UniProtKB-KW"/>
</dbReference>
<dbReference type="GO" id="GO:0032955">
    <property type="term" value="P:regulation of division septum assembly"/>
    <property type="evidence" value="ECO:0007669"/>
    <property type="project" value="InterPro"/>
</dbReference>
<dbReference type="FunFam" id="3.30.1070.10:FF:000001">
    <property type="entry name" value="Cell division topological specificity factor"/>
    <property type="match status" value="1"/>
</dbReference>
<dbReference type="Gene3D" id="3.30.1070.10">
    <property type="entry name" value="Cell division topological specificity factor MinE"/>
    <property type="match status" value="1"/>
</dbReference>
<dbReference type="HAMAP" id="MF_00262">
    <property type="entry name" value="MinE"/>
    <property type="match status" value="1"/>
</dbReference>
<dbReference type="InterPro" id="IPR005527">
    <property type="entry name" value="MinE"/>
</dbReference>
<dbReference type="InterPro" id="IPR036707">
    <property type="entry name" value="MinE_sf"/>
</dbReference>
<dbReference type="NCBIfam" id="TIGR01215">
    <property type="entry name" value="minE"/>
    <property type="match status" value="1"/>
</dbReference>
<dbReference type="NCBIfam" id="NF001422">
    <property type="entry name" value="PRK00296.1"/>
    <property type="match status" value="1"/>
</dbReference>
<dbReference type="Pfam" id="PF03776">
    <property type="entry name" value="MinE"/>
    <property type="match status" value="1"/>
</dbReference>
<dbReference type="SUPFAM" id="SSF55229">
    <property type="entry name" value="Cell division protein MinE topological specificity domain"/>
    <property type="match status" value="1"/>
</dbReference>
<accession>B3PCV7</accession>
<proteinExistence type="inferred from homology"/>
<gene>
    <name evidence="1" type="primary">minE</name>
    <name type="ordered locus">CJA_1320</name>
</gene>
<reference key="1">
    <citation type="journal article" date="2008" name="J. Bacteriol.">
        <title>Insights into plant cell wall degradation from the genome sequence of the soil bacterium Cellvibrio japonicus.</title>
        <authorList>
            <person name="DeBoy R.T."/>
            <person name="Mongodin E.F."/>
            <person name="Fouts D.E."/>
            <person name="Tailford L.E."/>
            <person name="Khouri H."/>
            <person name="Emerson J.B."/>
            <person name="Mohamoud Y."/>
            <person name="Watkins K."/>
            <person name="Henrissat B."/>
            <person name="Gilbert H.J."/>
            <person name="Nelson K.E."/>
        </authorList>
    </citation>
    <scope>NUCLEOTIDE SEQUENCE [LARGE SCALE GENOMIC DNA]</scope>
    <source>
        <strain>Ueda107</strain>
    </source>
</reference>